<evidence type="ECO:0000255" key="1">
    <source>
        <dbReference type="PROSITE-ProRule" id="PRU00080"/>
    </source>
</evidence>
<evidence type="ECO:0000303" key="2">
    <source>
    </source>
</evidence>
<accession>Q9M9T0</accession>
<accession>Q1G3F3</accession>
<protein>
    <recommendedName>
        <fullName>Probable F-box protein At1g14315</fullName>
    </recommendedName>
</protein>
<organism>
    <name type="scientific">Arabidopsis thaliana</name>
    <name type="common">Mouse-ear cress</name>
    <dbReference type="NCBI Taxonomy" id="3702"/>
    <lineage>
        <taxon>Eukaryota</taxon>
        <taxon>Viridiplantae</taxon>
        <taxon>Streptophyta</taxon>
        <taxon>Embryophyta</taxon>
        <taxon>Tracheophyta</taxon>
        <taxon>Spermatophyta</taxon>
        <taxon>Magnoliopsida</taxon>
        <taxon>eudicotyledons</taxon>
        <taxon>Gunneridae</taxon>
        <taxon>Pentapetalae</taxon>
        <taxon>rosids</taxon>
        <taxon>malvids</taxon>
        <taxon>Brassicales</taxon>
        <taxon>Brassicaceae</taxon>
        <taxon>Camelineae</taxon>
        <taxon>Arabidopsis</taxon>
    </lineage>
</organism>
<feature type="chain" id="PRO_0000283287" description="Probable F-box protein At1g14315">
    <location>
        <begin position="1"/>
        <end position="278"/>
    </location>
</feature>
<feature type="domain" description="F-box" evidence="1">
    <location>
        <begin position="1"/>
        <end position="43"/>
    </location>
</feature>
<feature type="splice variant" id="VSP_034098" description="In isoform 2." evidence="2">
    <location>
        <begin position="1"/>
        <end position="86"/>
    </location>
</feature>
<feature type="splice variant" id="VSP_034099" description="In isoform 2." evidence="2">
    <original>TLNNIVYNPATRWHRRFPVS</original>
    <variation>MYNSSELGLENATTCEVFDF</variation>
    <location>
        <begin position="87"/>
        <end position="106"/>
    </location>
</feature>
<dbReference type="EMBL" id="AC012188">
    <property type="protein sequence ID" value="AAF43931.1"/>
    <property type="molecule type" value="Genomic_DNA"/>
</dbReference>
<dbReference type="EMBL" id="CP002684">
    <property type="protein sequence ID" value="AEE29143.1"/>
    <property type="molecule type" value="Genomic_DNA"/>
</dbReference>
<dbReference type="EMBL" id="DQ487631">
    <property type="protein sequence ID" value="ABF59409.1"/>
    <property type="molecule type" value="Genomic_DNA"/>
</dbReference>
<dbReference type="EMBL" id="EF183410">
    <property type="status" value="NOT_ANNOTATED_CDS"/>
    <property type="molecule type" value="mRNA"/>
</dbReference>
<dbReference type="PIR" id="D86277">
    <property type="entry name" value="D86277"/>
</dbReference>
<dbReference type="RefSeq" id="NP_001117286.1">
    <molecule id="Q9M9T0-2"/>
    <property type="nucleotide sequence ID" value="NM_001123814.1"/>
</dbReference>
<dbReference type="SMR" id="Q9M9T0"/>
<dbReference type="FunCoup" id="Q9M9T0">
    <property type="interactions" value="1"/>
</dbReference>
<dbReference type="PaxDb" id="3702-AT1G14315.2"/>
<dbReference type="EnsemblPlants" id="AT1G14315.1">
    <molecule id="Q9M9T0-2"/>
    <property type="protein sequence ID" value="AT1G14315.1"/>
    <property type="gene ID" value="AT1G14315"/>
</dbReference>
<dbReference type="GeneID" id="6241224"/>
<dbReference type="Gramene" id="AT1G14315.1">
    <molecule id="Q9M9T0-2"/>
    <property type="protein sequence ID" value="AT1G14315.1"/>
    <property type="gene ID" value="AT1G14315"/>
</dbReference>
<dbReference type="KEGG" id="ath:AT1G14315"/>
<dbReference type="Araport" id="AT1G14315"/>
<dbReference type="TAIR" id="AT1G14315"/>
<dbReference type="InParanoid" id="Q9M9T0"/>
<dbReference type="PhylomeDB" id="Q9M9T0"/>
<dbReference type="PRO" id="PR:Q9M9T0"/>
<dbReference type="Proteomes" id="UP000006548">
    <property type="component" value="Chromosome 1"/>
</dbReference>
<dbReference type="ExpressionAtlas" id="Q9M9T0">
    <property type="expression patterns" value="baseline and differential"/>
</dbReference>
<dbReference type="CDD" id="cd22157">
    <property type="entry name" value="F-box_AtFBW1-like"/>
    <property type="match status" value="1"/>
</dbReference>
<dbReference type="Gene3D" id="2.120.10.80">
    <property type="entry name" value="Kelch-type beta propeller"/>
    <property type="match status" value="1"/>
</dbReference>
<dbReference type="InterPro" id="IPR006527">
    <property type="entry name" value="F-box-assoc_dom_typ1"/>
</dbReference>
<dbReference type="InterPro" id="IPR036047">
    <property type="entry name" value="F-box-like_dom_sf"/>
</dbReference>
<dbReference type="InterPro" id="IPR001810">
    <property type="entry name" value="F-box_dom"/>
</dbReference>
<dbReference type="InterPro" id="IPR011043">
    <property type="entry name" value="Gal_Oxase/kelch_b-propeller"/>
</dbReference>
<dbReference type="InterPro" id="IPR015915">
    <property type="entry name" value="Kelch-typ_b-propeller"/>
</dbReference>
<dbReference type="InterPro" id="IPR050796">
    <property type="entry name" value="SCF_F-box_component"/>
</dbReference>
<dbReference type="PANTHER" id="PTHR31672">
    <property type="entry name" value="BNACNNG10540D PROTEIN"/>
    <property type="match status" value="1"/>
</dbReference>
<dbReference type="PANTHER" id="PTHR31672:SF13">
    <property type="entry name" value="F-BOX PROTEIN CPR30-LIKE"/>
    <property type="match status" value="1"/>
</dbReference>
<dbReference type="Pfam" id="PF00646">
    <property type="entry name" value="F-box"/>
    <property type="match status" value="1"/>
</dbReference>
<dbReference type="Pfam" id="PF07734">
    <property type="entry name" value="FBA_1"/>
    <property type="match status" value="1"/>
</dbReference>
<dbReference type="SMART" id="SM00256">
    <property type="entry name" value="FBOX"/>
    <property type="match status" value="1"/>
</dbReference>
<dbReference type="SUPFAM" id="SSF81383">
    <property type="entry name" value="F-box domain"/>
    <property type="match status" value="1"/>
</dbReference>
<dbReference type="SUPFAM" id="SSF50965">
    <property type="entry name" value="Galactose oxidase, central domain"/>
    <property type="match status" value="1"/>
</dbReference>
<dbReference type="PROSITE" id="PS50181">
    <property type="entry name" value="FBOX"/>
    <property type="match status" value="1"/>
</dbReference>
<gene>
    <name type="ordered locus">At1g14315</name>
    <name type="ORF">F14L17.8</name>
</gene>
<keyword id="KW-0025">Alternative splicing</keyword>
<keyword id="KW-1185">Reference proteome</keyword>
<proteinExistence type="evidence at transcript level"/>
<sequence>MQLLPHDTVEDILERVPVKSLLRFKSACKQWKLTIESQYFQAKQLICSAGGKDLNLVLVSEVPKRYHIYQLFHNSCDGLVCLFDYQTLNNIVYNPATRWHRRFPVSSTNTWRYINPSSPYRINTSSSRGHALYVDGSLYWLTGKKEIKVLALDLHTETFQVISKAPFAEADHRNIITRSLNNRLCLSVSKPLQQMIIWSFNSENKTWEQIYSIVNRSVTQSLPVAILEKNKLLCCPRSNSRQLMIYDIKTKSVDSVSIGTYRCGDSVFCYFESLISIL</sequence>
<comment type="alternative products">
    <event type="alternative splicing"/>
    <isoform>
        <id>Q9M9T0-1</id>
        <name>1</name>
        <sequence type="displayed"/>
    </isoform>
    <isoform>
        <id>Q9M9T0-2</id>
        <name>2</name>
        <sequence type="described" ref="VSP_034098 VSP_034099"/>
    </isoform>
</comment>
<name>FB8_ARATH</name>
<reference key="1">
    <citation type="journal article" date="2000" name="Nature">
        <title>Sequence and analysis of chromosome 1 of the plant Arabidopsis thaliana.</title>
        <authorList>
            <person name="Theologis A."/>
            <person name="Ecker J.R."/>
            <person name="Palm C.J."/>
            <person name="Federspiel N.A."/>
            <person name="Kaul S."/>
            <person name="White O."/>
            <person name="Alonso J."/>
            <person name="Altafi H."/>
            <person name="Araujo R."/>
            <person name="Bowman C.L."/>
            <person name="Brooks S.Y."/>
            <person name="Buehler E."/>
            <person name="Chan A."/>
            <person name="Chao Q."/>
            <person name="Chen H."/>
            <person name="Cheuk R.F."/>
            <person name="Chin C.W."/>
            <person name="Chung M.K."/>
            <person name="Conn L."/>
            <person name="Conway A.B."/>
            <person name="Conway A.R."/>
            <person name="Creasy T.H."/>
            <person name="Dewar K."/>
            <person name="Dunn P."/>
            <person name="Etgu P."/>
            <person name="Feldblyum T.V."/>
            <person name="Feng J.-D."/>
            <person name="Fong B."/>
            <person name="Fujii C.Y."/>
            <person name="Gill J.E."/>
            <person name="Goldsmith A.D."/>
            <person name="Haas B."/>
            <person name="Hansen N.F."/>
            <person name="Hughes B."/>
            <person name="Huizar L."/>
            <person name="Hunter J.L."/>
            <person name="Jenkins J."/>
            <person name="Johnson-Hopson C."/>
            <person name="Khan S."/>
            <person name="Khaykin E."/>
            <person name="Kim C.J."/>
            <person name="Koo H.L."/>
            <person name="Kremenetskaia I."/>
            <person name="Kurtz D.B."/>
            <person name="Kwan A."/>
            <person name="Lam B."/>
            <person name="Langin-Hooper S."/>
            <person name="Lee A."/>
            <person name="Lee J.M."/>
            <person name="Lenz C.A."/>
            <person name="Li J.H."/>
            <person name="Li Y.-P."/>
            <person name="Lin X."/>
            <person name="Liu S.X."/>
            <person name="Liu Z.A."/>
            <person name="Luros J.S."/>
            <person name="Maiti R."/>
            <person name="Marziali A."/>
            <person name="Militscher J."/>
            <person name="Miranda M."/>
            <person name="Nguyen M."/>
            <person name="Nierman W.C."/>
            <person name="Osborne B.I."/>
            <person name="Pai G."/>
            <person name="Peterson J."/>
            <person name="Pham P.K."/>
            <person name="Rizzo M."/>
            <person name="Rooney T."/>
            <person name="Rowley D."/>
            <person name="Sakano H."/>
            <person name="Salzberg S.L."/>
            <person name="Schwartz J.R."/>
            <person name="Shinn P."/>
            <person name="Southwick A.M."/>
            <person name="Sun H."/>
            <person name="Tallon L.J."/>
            <person name="Tambunga G."/>
            <person name="Toriumi M.J."/>
            <person name="Town C.D."/>
            <person name="Utterback T."/>
            <person name="Van Aken S."/>
            <person name="Vaysberg M."/>
            <person name="Vysotskaia V.S."/>
            <person name="Walker M."/>
            <person name="Wu D."/>
            <person name="Yu G."/>
            <person name="Fraser C.M."/>
            <person name="Venter J.C."/>
            <person name="Davis R.W."/>
        </authorList>
    </citation>
    <scope>NUCLEOTIDE SEQUENCE [LARGE SCALE GENOMIC DNA]</scope>
    <source>
        <strain>cv. Columbia</strain>
    </source>
</reference>
<reference key="2">
    <citation type="journal article" date="2017" name="Plant J.">
        <title>Araport11: a complete reannotation of the Arabidopsis thaliana reference genome.</title>
        <authorList>
            <person name="Cheng C.Y."/>
            <person name="Krishnakumar V."/>
            <person name="Chan A.P."/>
            <person name="Thibaud-Nissen F."/>
            <person name="Schobel S."/>
            <person name="Town C.D."/>
        </authorList>
    </citation>
    <scope>GENOME REANNOTATION</scope>
    <source>
        <strain>cv. Columbia</strain>
    </source>
</reference>
<reference key="3">
    <citation type="journal article" date="2006" name="Plant Biotechnol. J.">
        <title>Simultaneous high-throughput recombinational cloning of open reading frames in closed and open configurations.</title>
        <authorList>
            <person name="Underwood B.A."/>
            <person name="Vanderhaeghen R."/>
            <person name="Whitford R."/>
            <person name="Town C.D."/>
            <person name="Hilson P."/>
        </authorList>
    </citation>
    <scope>NUCLEOTIDE SEQUENCE [LARGE SCALE GENOMIC DNA] (ISOFORM 2)</scope>
    <source>
        <strain>cv. Columbia</strain>
    </source>
</reference>
<reference key="4">
    <citation type="journal article" date="2007" name="BMC Genomics">
        <title>Experimental validation of novel genes predicted in the un-annotated regions of the Arabidopsis genome.</title>
        <authorList>
            <person name="Moskal W.A. Jr."/>
            <person name="Wu H.C."/>
            <person name="Underwood B.A."/>
            <person name="Wang W."/>
            <person name="Town C.D."/>
            <person name="Xiao Y.-L."/>
        </authorList>
    </citation>
    <scope>NUCLEOTIDE SEQUENCE [LARGE SCALE MRNA] (ISOFORM 2)</scope>
    <source>
        <strain>cv. Columbia</strain>
    </source>
</reference>